<proteinExistence type="evidence at protein level"/>
<name>MDH_LEGPH</name>
<gene>
    <name evidence="1" type="primary">mdh</name>
    <name type="ordered locus">lpg2352</name>
</gene>
<accession>Q5ZT13</accession>
<dbReference type="EC" id="1.1.1.37" evidence="1"/>
<dbReference type="EMBL" id="AE017354">
    <property type="protein sequence ID" value="AAU28414.1"/>
    <property type="molecule type" value="Genomic_DNA"/>
</dbReference>
<dbReference type="RefSeq" id="WP_010948058.1">
    <property type="nucleotide sequence ID" value="NC_002942.5"/>
</dbReference>
<dbReference type="RefSeq" id="YP_096361.1">
    <property type="nucleotide sequence ID" value="NC_002942.5"/>
</dbReference>
<dbReference type="PDB" id="6PBL">
    <property type="method" value="X-ray"/>
    <property type="resolution" value="1.85 A"/>
    <property type="chains" value="A/B=1-330"/>
</dbReference>
<dbReference type="PDBsum" id="6PBL"/>
<dbReference type="SMR" id="Q5ZT13"/>
<dbReference type="STRING" id="272624.lpg2352"/>
<dbReference type="PaxDb" id="272624-lpg2352"/>
<dbReference type="KEGG" id="lpn:lpg2352"/>
<dbReference type="PATRIC" id="fig|272624.6.peg.2473"/>
<dbReference type="eggNOG" id="COG0039">
    <property type="taxonomic scope" value="Bacteria"/>
</dbReference>
<dbReference type="HOGENOM" id="CLU_040727_2_0_6"/>
<dbReference type="OrthoDB" id="9802969at2"/>
<dbReference type="Proteomes" id="UP000000609">
    <property type="component" value="Chromosome"/>
</dbReference>
<dbReference type="GO" id="GO:0030060">
    <property type="term" value="F:L-malate dehydrogenase (NAD+) activity"/>
    <property type="evidence" value="ECO:0007669"/>
    <property type="project" value="UniProtKB-UniRule"/>
</dbReference>
<dbReference type="GO" id="GO:0006108">
    <property type="term" value="P:malate metabolic process"/>
    <property type="evidence" value="ECO:0007669"/>
    <property type="project" value="InterPro"/>
</dbReference>
<dbReference type="GO" id="GO:0006099">
    <property type="term" value="P:tricarboxylic acid cycle"/>
    <property type="evidence" value="ECO:0007669"/>
    <property type="project" value="UniProtKB-UniRule"/>
</dbReference>
<dbReference type="CDD" id="cd01338">
    <property type="entry name" value="MDH_chloroplast-like"/>
    <property type="match status" value="1"/>
</dbReference>
<dbReference type="FunFam" id="3.40.50.720:FF:000010">
    <property type="entry name" value="Malate dehydrogenase"/>
    <property type="match status" value="1"/>
</dbReference>
<dbReference type="FunFam" id="3.90.110.10:FF:000002">
    <property type="entry name" value="Malate dehydrogenase"/>
    <property type="match status" value="1"/>
</dbReference>
<dbReference type="Gene3D" id="3.90.110.10">
    <property type="entry name" value="Lactate dehydrogenase/glycoside hydrolase, family 4, C-terminal"/>
    <property type="match status" value="1"/>
</dbReference>
<dbReference type="Gene3D" id="3.40.50.720">
    <property type="entry name" value="NAD(P)-binding Rossmann-like Domain"/>
    <property type="match status" value="1"/>
</dbReference>
<dbReference type="HAMAP" id="MF_01517">
    <property type="entry name" value="Malate_dehydrog_2"/>
    <property type="match status" value="1"/>
</dbReference>
<dbReference type="InterPro" id="IPR001557">
    <property type="entry name" value="L-lactate/malate_DH"/>
</dbReference>
<dbReference type="InterPro" id="IPR022383">
    <property type="entry name" value="Lactate/malate_DH_C"/>
</dbReference>
<dbReference type="InterPro" id="IPR001236">
    <property type="entry name" value="Lactate/malate_DH_N"/>
</dbReference>
<dbReference type="InterPro" id="IPR015955">
    <property type="entry name" value="Lactate_DH/Glyco_Ohase_4_C"/>
</dbReference>
<dbReference type="InterPro" id="IPR001252">
    <property type="entry name" value="Malate_DH_AS"/>
</dbReference>
<dbReference type="InterPro" id="IPR010945">
    <property type="entry name" value="Malate_DH_type2"/>
</dbReference>
<dbReference type="InterPro" id="IPR036291">
    <property type="entry name" value="NAD(P)-bd_dom_sf"/>
</dbReference>
<dbReference type="NCBIfam" id="TIGR01759">
    <property type="entry name" value="MalateDH-SF1"/>
    <property type="match status" value="1"/>
</dbReference>
<dbReference type="NCBIfam" id="NF003916">
    <property type="entry name" value="PRK05442.1"/>
    <property type="match status" value="1"/>
</dbReference>
<dbReference type="PANTHER" id="PTHR23382">
    <property type="entry name" value="MALATE DEHYDROGENASE"/>
    <property type="match status" value="1"/>
</dbReference>
<dbReference type="Pfam" id="PF02866">
    <property type="entry name" value="Ldh_1_C"/>
    <property type="match status" value="1"/>
</dbReference>
<dbReference type="Pfam" id="PF00056">
    <property type="entry name" value="Ldh_1_N"/>
    <property type="match status" value="1"/>
</dbReference>
<dbReference type="PIRSF" id="PIRSF000102">
    <property type="entry name" value="Lac_mal_DH"/>
    <property type="match status" value="1"/>
</dbReference>
<dbReference type="SUPFAM" id="SSF56327">
    <property type="entry name" value="LDH C-terminal domain-like"/>
    <property type="match status" value="1"/>
</dbReference>
<dbReference type="SUPFAM" id="SSF51735">
    <property type="entry name" value="NAD(P)-binding Rossmann-fold domains"/>
    <property type="match status" value="1"/>
</dbReference>
<dbReference type="PROSITE" id="PS00068">
    <property type="entry name" value="MDH"/>
    <property type="match status" value="1"/>
</dbReference>
<reference key="1">
    <citation type="journal article" date="2004" name="Science">
        <title>The genomic sequence of the accidental pathogen Legionella pneumophila.</title>
        <authorList>
            <person name="Chien M."/>
            <person name="Morozova I."/>
            <person name="Shi S."/>
            <person name="Sheng H."/>
            <person name="Chen J."/>
            <person name="Gomez S.M."/>
            <person name="Asamani G."/>
            <person name="Hill K."/>
            <person name="Nuara J."/>
            <person name="Feder M."/>
            <person name="Rineer J."/>
            <person name="Greenberg J.J."/>
            <person name="Steshenko V."/>
            <person name="Park S.H."/>
            <person name="Zhao B."/>
            <person name="Teplitskaya E."/>
            <person name="Edwards J.R."/>
            <person name="Pampou S."/>
            <person name="Georghiou A."/>
            <person name="Chou I.-C."/>
            <person name="Iannuccilli W."/>
            <person name="Ulz M.E."/>
            <person name="Kim D.H."/>
            <person name="Geringer-Sameth A."/>
            <person name="Goldsberry C."/>
            <person name="Morozov P."/>
            <person name="Fischer S.G."/>
            <person name="Segal G."/>
            <person name="Qu X."/>
            <person name="Rzhetsky A."/>
            <person name="Zhang P."/>
            <person name="Cayanis E."/>
            <person name="De Jong P.J."/>
            <person name="Ju J."/>
            <person name="Kalachikov S."/>
            <person name="Shuman H.A."/>
            <person name="Russo J.J."/>
        </authorList>
    </citation>
    <scope>NUCLEOTIDE SEQUENCE [LARGE SCALE GENOMIC DNA]</scope>
    <source>
        <strain>Philadelphia 1 / ATCC 33152 / DSM 7513</strain>
    </source>
</reference>
<feature type="chain" id="PRO_0000113372" description="Malate dehydrogenase">
    <location>
        <begin position="1"/>
        <end position="330"/>
    </location>
</feature>
<feature type="active site" description="Proton acceptor" evidence="1">
    <location>
        <position position="188"/>
    </location>
</feature>
<feature type="binding site" evidence="1">
    <location>
        <begin position="12"/>
        <end position="18"/>
    </location>
    <ligand>
        <name>NAD(+)</name>
        <dbReference type="ChEBI" id="CHEBI:57540"/>
    </ligand>
</feature>
<feature type="binding site" evidence="1">
    <location>
        <position position="93"/>
    </location>
    <ligand>
        <name>substrate</name>
    </ligand>
</feature>
<feature type="binding site" evidence="1">
    <location>
        <position position="99"/>
    </location>
    <ligand>
        <name>substrate</name>
    </ligand>
</feature>
<feature type="binding site" evidence="1">
    <location>
        <position position="106"/>
    </location>
    <ligand>
        <name>NAD(+)</name>
        <dbReference type="ChEBI" id="CHEBI:57540"/>
    </ligand>
</feature>
<feature type="binding site" evidence="1">
    <location>
        <position position="113"/>
    </location>
    <ligand>
        <name>NAD(+)</name>
        <dbReference type="ChEBI" id="CHEBI:57540"/>
    </ligand>
</feature>
<feature type="binding site" evidence="1">
    <location>
        <begin position="130"/>
        <end position="132"/>
    </location>
    <ligand>
        <name>NAD(+)</name>
        <dbReference type="ChEBI" id="CHEBI:57540"/>
    </ligand>
</feature>
<feature type="binding site" evidence="1">
    <location>
        <position position="132"/>
    </location>
    <ligand>
        <name>substrate</name>
    </ligand>
</feature>
<feature type="binding site" evidence="1">
    <location>
        <position position="163"/>
    </location>
    <ligand>
        <name>substrate</name>
    </ligand>
</feature>
<feature type="strand" evidence="2">
    <location>
        <begin position="5"/>
        <end position="10"/>
    </location>
</feature>
<feature type="turn" evidence="2">
    <location>
        <begin position="11"/>
        <end position="14"/>
    </location>
</feature>
<feature type="helix" evidence="2">
    <location>
        <begin position="16"/>
        <end position="26"/>
    </location>
</feature>
<feature type="turn" evidence="2">
    <location>
        <begin position="27"/>
        <end position="31"/>
    </location>
</feature>
<feature type="strand" evidence="2">
    <location>
        <begin position="36"/>
        <end position="42"/>
    </location>
</feature>
<feature type="helix" evidence="2">
    <location>
        <begin position="45"/>
        <end position="47"/>
    </location>
</feature>
<feature type="helix" evidence="2">
    <location>
        <begin position="48"/>
        <end position="59"/>
    </location>
</feature>
<feature type="turn" evidence="2">
    <location>
        <begin position="60"/>
        <end position="62"/>
    </location>
</feature>
<feature type="strand" evidence="2">
    <location>
        <begin position="66"/>
        <end position="73"/>
    </location>
</feature>
<feature type="helix" evidence="2">
    <location>
        <begin position="75"/>
        <end position="79"/>
    </location>
</feature>
<feature type="strand" evidence="2">
    <location>
        <begin position="83"/>
        <end position="87"/>
    </location>
</feature>
<feature type="helix" evidence="2">
    <location>
        <begin position="99"/>
        <end position="120"/>
    </location>
</feature>
<feature type="strand" evidence="2">
    <location>
        <begin position="126"/>
        <end position="129"/>
    </location>
</feature>
<feature type="strand" evidence="2">
    <location>
        <begin position="131"/>
        <end position="133"/>
    </location>
</feature>
<feature type="helix" evidence="2">
    <location>
        <begin position="134"/>
        <end position="143"/>
    </location>
</feature>
<feature type="helix" evidence="2">
    <location>
        <begin position="150"/>
        <end position="152"/>
    </location>
</feature>
<feature type="strand" evidence="2">
    <location>
        <begin position="153"/>
        <end position="155"/>
    </location>
</feature>
<feature type="helix" evidence="2">
    <location>
        <begin position="158"/>
        <end position="171"/>
    </location>
</feature>
<feature type="helix" evidence="2">
    <location>
        <begin position="176"/>
        <end position="178"/>
    </location>
</feature>
<feature type="strand" evidence="2">
    <location>
        <begin position="184"/>
        <end position="186"/>
    </location>
</feature>
<feature type="turn" evidence="2">
    <location>
        <begin position="196"/>
        <end position="198"/>
    </location>
</feature>
<feature type="strand" evidence="2">
    <location>
        <begin position="199"/>
        <end position="201"/>
    </location>
</feature>
<feature type="helix" evidence="2">
    <location>
        <begin position="206"/>
        <end position="210"/>
    </location>
</feature>
<feature type="helix" evidence="2">
    <location>
        <begin position="213"/>
        <end position="218"/>
    </location>
</feature>
<feature type="helix" evidence="2">
    <location>
        <begin position="220"/>
        <end position="225"/>
    </location>
</feature>
<feature type="helix" evidence="2">
    <location>
        <begin position="227"/>
        <end position="235"/>
    </location>
</feature>
<feature type="helix" evidence="2">
    <location>
        <begin position="240"/>
        <end position="255"/>
    </location>
</feature>
<feature type="strand" evidence="2">
    <location>
        <begin position="264"/>
        <end position="269"/>
    </location>
</feature>
<feature type="helix" evidence="2">
    <location>
        <begin position="273"/>
        <end position="275"/>
    </location>
</feature>
<feature type="strand" evidence="2">
    <location>
        <begin position="281"/>
        <end position="289"/>
    </location>
</feature>
<feature type="strand" evidence="2">
    <location>
        <begin position="292"/>
        <end position="295"/>
    </location>
</feature>
<feature type="helix" evidence="2">
    <location>
        <begin position="303"/>
        <end position="325"/>
    </location>
</feature>
<sequence length="330" mass="36007">MTNNRVRVAVTGAAGQIGYALVFRIASGQMFGPNTEVELNLLELEPALPSLEGVAMELDDCAFPLLKRIVCTADLNKAMDGVNWALLVGSVPRKQGMERSDLLQINGGIFTKQGQAINDYASDDVRVFVVGNPCNTNCLIAMNHAKDVPSDRFYAMTTLDELRARTQLAKKAGVDITAVTQMTIWGNHSATQYPDFYNAKINGTSAAQVINDETWLKETFVSTVQQRGAAVIKARGSSSAASAANAIITGVNHLVTDTPAGESFSMCRRSKGEYGVDEGLIFSFPCRREHGELKVVENLEFNDFGRERFNTTLNELRSERDTVKSLGLLD</sequence>
<keyword id="KW-0002">3D-structure</keyword>
<keyword id="KW-0520">NAD</keyword>
<keyword id="KW-0560">Oxidoreductase</keyword>
<keyword id="KW-1185">Reference proteome</keyword>
<keyword id="KW-0816">Tricarboxylic acid cycle</keyword>
<organism>
    <name type="scientific">Legionella pneumophila subsp. pneumophila (strain Philadelphia 1 / ATCC 33152 / DSM 7513)</name>
    <dbReference type="NCBI Taxonomy" id="272624"/>
    <lineage>
        <taxon>Bacteria</taxon>
        <taxon>Pseudomonadati</taxon>
        <taxon>Pseudomonadota</taxon>
        <taxon>Gammaproteobacteria</taxon>
        <taxon>Legionellales</taxon>
        <taxon>Legionellaceae</taxon>
        <taxon>Legionella</taxon>
    </lineage>
</organism>
<protein>
    <recommendedName>
        <fullName evidence="1">Malate dehydrogenase</fullName>
        <ecNumber evidence="1">1.1.1.37</ecNumber>
    </recommendedName>
</protein>
<comment type="function">
    <text evidence="1">Catalyzes the reversible oxidation of malate to oxaloacetate.</text>
</comment>
<comment type="catalytic activity">
    <reaction evidence="1">
        <text>(S)-malate + NAD(+) = oxaloacetate + NADH + H(+)</text>
        <dbReference type="Rhea" id="RHEA:21432"/>
        <dbReference type="ChEBI" id="CHEBI:15378"/>
        <dbReference type="ChEBI" id="CHEBI:15589"/>
        <dbReference type="ChEBI" id="CHEBI:16452"/>
        <dbReference type="ChEBI" id="CHEBI:57540"/>
        <dbReference type="ChEBI" id="CHEBI:57945"/>
        <dbReference type="EC" id="1.1.1.37"/>
    </reaction>
</comment>
<comment type="similarity">
    <text evidence="1">Belongs to the LDH/MDH superfamily. MDH type 2 family.</text>
</comment>
<evidence type="ECO:0000255" key="1">
    <source>
        <dbReference type="HAMAP-Rule" id="MF_01517"/>
    </source>
</evidence>
<evidence type="ECO:0007829" key="2">
    <source>
        <dbReference type="PDB" id="6PBL"/>
    </source>
</evidence>